<dbReference type="EMBL" id="X57185">
    <property type="protein sequence ID" value="CAA40472.1"/>
    <property type="molecule type" value="Genomic_DNA"/>
</dbReference>
<dbReference type="EMBL" id="X85807">
    <property type="protein sequence ID" value="CAA59817.1"/>
    <property type="molecule type" value="Genomic_DNA"/>
</dbReference>
<dbReference type="EMBL" id="Z72944">
    <property type="protein sequence ID" value="CAA97173.1"/>
    <property type="molecule type" value="Genomic_DNA"/>
</dbReference>
<dbReference type="EMBL" id="Z72946">
    <property type="protein sequence ID" value="CAA97180.1"/>
    <property type="molecule type" value="Genomic_DNA"/>
</dbReference>
<dbReference type="EMBL" id="BK006941">
    <property type="protein sequence ID" value="DAA08250.1"/>
    <property type="molecule type" value="Genomic_DNA"/>
</dbReference>
<dbReference type="PIR" id="A39205">
    <property type="entry name" value="A39205"/>
</dbReference>
<dbReference type="RefSeq" id="NP_011675.1">
    <property type="nucleotide sequence ID" value="NM_001181288.1"/>
</dbReference>
<dbReference type="SMR" id="P27476"/>
<dbReference type="BioGRID" id="33407">
    <property type="interactions" value="171"/>
</dbReference>
<dbReference type="DIP" id="DIP-5537N"/>
<dbReference type="FunCoup" id="P27476">
    <property type="interactions" value="527"/>
</dbReference>
<dbReference type="IntAct" id="P27476">
    <property type="interactions" value="71"/>
</dbReference>
<dbReference type="MINT" id="P27476"/>
<dbReference type="STRING" id="4932.YGR159C"/>
<dbReference type="iPTMnet" id="P27476"/>
<dbReference type="PaxDb" id="4932-YGR159C"/>
<dbReference type="PeptideAtlas" id="P27476"/>
<dbReference type="EnsemblFungi" id="YGR159C_mRNA">
    <property type="protein sequence ID" value="YGR159C"/>
    <property type="gene ID" value="YGR159C"/>
</dbReference>
<dbReference type="GeneID" id="853064"/>
<dbReference type="KEGG" id="sce:YGR159C"/>
<dbReference type="AGR" id="SGD:S000003391"/>
<dbReference type="SGD" id="S000003391">
    <property type="gene designation" value="NSR1"/>
</dbReference>
<dbReference type="VEuPathDB" id="FungiDB:YGR159C"/>
<dbReference type="eggNOG" id="KOG4210">
    <property type="taxonomic scope" value="Eukaryota"/>
</dbReference>
<dbReference type="GeneTree" id="ENSGT00940000170607"/>
<dbReference type="HOGENOM" id="CLU_026791_0_0_1"/>
<dbReference type="InParanoid" id="P27476"/>
<dbReference type="OMA" id="EAMNGEY"/>
<dbReference type="OrthoDB" id="439808at2759"/>
<dbReference type="BioCyc" id="YEAST:G3O-30859-MONOMER"/>
<dbReference type="BioGRID-ORCS" id="853064">
    <property type="hits" value="9 hits in 10 CRISPR screens"/>
</dbReference>
<dbReference type="CD-CODE" id="BDAE0F88">
    <property type="entry name" value="Nucleolus"/>
</dbReference>
<dbReference type="PRO" id="PR:P27476"/>
<dbReference type="Proteomes" id="UP000002311">
    <property type="component" value="Chromosome VII"/>
</dbReference>
<dbReference type="RNAct" id="P27476">
    <property type="molecule type" value="protein"/>
</dbReference>
<dbReference type="GO" id="GO:0005739">
    <property type="term" value="C:mitochondrion"/>
    <property type="evidence" value="ECO:0007005"/>
    <property type="project" value="SGD"/>
</dbReference>
<dbReference type="GO" id="GO:0005635">
    <property type="term" value="C:nuclear envelope"/>
    <property type="evidence" value="ECO:0000314"/>
    <property type="project" value="SGD"/>
</dbReference>
<dbReference type="GO" id="GO:0005730">
    <property type="term" value="C:nucleolus"/>
    <property type="evidence" value="ECO:0000314"/>
    <property type="project" value="ComplexPortal"/>
</dbReference>
<dbReference type="GO" id="GO:0005634">
    <property type="term" value="C:nucleus"/>
    <property type="evidence" value="ECO:0000314"/>
    <property type="project" value="SGD"/>
</dbReference>
<dbReference type="GO" id="GO:0032040">
    <property type="term" value="C:small-subunit processome"/>
    <property type="evidence" value="ECO:0000353"/>
    <property type="project" value="ComplexPortal"/>
</dbReference>
<dbReference type="GO" id="GO:0051880">
    <property type="term" value="F:G-quadruplex DNA binding"/>
    <property type="evidence" value="ECO:0000314"/>
    <property type="project" value="SGD"/>
</dbReference>
<dbReference type="GO" id="GO:0003729">
    <property type="term" value="F:mRNA binding"/>
    <property type="evidence" value="ECO:0007005"/>
    <property type="project" value="SGD"/>
</dbReference>
<dbReference type="GO" id="GO:0008139">
    <property type="term" value="F:nuclear localization sequence binding"/>
    <property type="evidence" value="ECO:0000314"/>
    <property type="project" value="SGD"/>
</dbReference>
<dbReference type="GO" id="GO:0003723">
    <property type="term" value="F:RNA binding"/>
    <property type="evidence" value="ECO:0000314"/>
    <property type="project" value="SGD"/>
</dbReference>
<dbReference type="GO" id="GO:0043047">
    <property type="term" value="F:single-stranded telomeric DNA binding"/>
    <property type="evidence" value="ECO:0000314"/>
    <property type="project" value="SGD"/>
</dbReference>
<dbReference type="GO" id="GO:0051276">
    <property type="term" value="P:chromosome organization"/>
    <property type="evidence" value="ECO:0000315"/>
    <property type="project" value="SGD"/>
</dbReference>
<dbReference type="GO" id="GO:0006310">
    <property type="term" value="P:DNA recombination"/>
    <property type="evidence" value="ECO:0000315"/>
    <property type="project" value="SGD"/>
</dbReference>
<dbReference type="GO" id="GO:0030490">
    <property type="term" value="P:maturation of SSU-rRNA"/>
    <property type="evidence" value="ECO:0000303"/>
    <property type="project" value="ComplexPortal"/>
</dbReference>
<dbReference type="GO" id="GO:0000028">
    <property type="term" value="P:ribosomal small subunit assembly"/>
    <property type="evidence" value="ECO:0000304"/>
    <property type="project" value="SGD"/>
</dbReference>
<dbReference type="GO" id="GO:0006364">
    <property type="term" value="P:rRNA processing"/>
    <property type="evidence" value="ECO:0000304"/>
    <property type="project" value="SGD"/>
</dbReference>
<dbReference type="CDD" id="cd12447">
    <property type="entry name" value="RRM1_gar2"/>
    <property type="match status" value="1"/>
</dbReference>
<dbReference type="CDD" id="cd12448">
    <property type="entry name" value="RRM2_gar2"/>
    <property type="match status" value="1"/>
</dbReference>
<dbReference type="FunFam" id="3.30.70.330:FF:000550">
    <property type="entry name" value="Nuclear localization sequence binding protein"/>
    <property type="match status" value="1"/>
</dbReference>
<dbReference type="FunFam" id="3.30.70.330:FF:000621">
    <property type="entry name" value="Nuclear localization sequence-binding protein"/>
    <property type="match status" value="1"/>
</dbReference>
<dbReference type="Gene3D" id="3.30.70.330">
    <property type="match status" value="2"/>
</dbReference>
<dbReference type="InterPro" id="IPR050502">
    <property type="entry name" value="Euk_RNA-bind_prot"/>
</dbReference>
<dbReference type="InterPro" id="IPR034276">
    <property type="entry name" value="Gar2_RRM2"/>
</dbReference>
<dbReference type="InterPro" id="IPR012677">
    <property type="entry name" value="Nucleotide-bd_a/b_plait_sf"/>
</dbReference>
<dbReference type="InterPro" id="IPR035979">
    <property type="entry name" value="RBD_domain_sf"/>
</dbReference>
<dbReference type="InterPro" id="IPR000504">
    <property type="entry name" value="RRM_dom"/>
</dbReference>
<dbReference type="PANTHER" id="PTHR48025">
    <property type="entry name" value="OS02G0815200 PROTEIN"/>
    <property type="match status" value="1"/>
</dbReference>
<dbReference type="PANTHER" id="PTHR48025:SF1">
    <property type="entry name" value="RRM DOMAIN-CONTAINING PROTEIN"/>
    <property type="match status" value="1"/>
</dbReference>
<dbReference type="Pfam" id="PF00076">
    <property type="entry name" value="RRM_1"/>
    <property type="match status" value="2"/>
</dbReference>
<dbReference type="SMART" id="SM00360">
    <property type="entry name" value="RRM"/>
    <property type="match status" value="2"/>
</dbReference>
<dbReference type="SUPFAM" id="SSF54928">
    <property type="entry name" value="RNA-binding domain, RBD"/>
    <property type="match status" value="2"/>
</dbReference>
<dbReference type="PROSITE" id="PS50102">
    <property type="entry name" value="RRM"/>
    <property type="match status" value="2"/>
</dbReference>
<comment type="function">
    <text evidence="7 8 14 18">Involved in pre-rRNA processing (PubMed:1644811). Specifically binds nuclear localization sequences (PubMed:1706724). Candidate for a receptor at the nucleus that may be involved in both RNA and protein transport (Probable). Binds telomeric sequences of the type (TG[1-3])n in vitro (PubMed:7800479).</text>
</comment>
<comment type="subcellular location">
    <subcellularLocation>
        <location evidence="8 10">Nucleus</location>
    </subcellularLocation>
    <subcellularLocation>
        <location evidence="4">Nucleus</location>
        <location evidence="4">Nucleolus</location>
    </subcellularLocation>
</comment>
<comment type="induction">
    <text>In response to low temperature (By cold-shock).</text>
</comment>
<comment type="PTM">
    <text evidence="4">Methylated by HMT1, forming asymmetric dimethylarginines (DMA) within a domain referred to as an RGG box, made up of repeated Gly-Gly dipeptides interspersed with Arg and aromatic residues.</text>
</comment>
<comment type="PTM">
    <text evidence="6 9">Pyrophosphorylated by 5-diphosphoinositol pentakisphosphate (5-IP7) (PubMed:15604408). Serine pyrophosphorylation is achieved by Mg(2+)-dependent, but enzyme independent transfer of a beta-phosphate from a inositol pyrophosphate to a pre-phosphorylated serine residue (PubMed:15604408, PubMed:17873058).</text>
</comment>
<comment type="miscellaneous">
    <text evidence="5">Present with 77400 molecules/cell in log phase SD medium.</text>
</comment>
<comment type="similarity">
    <text evidence="16">Belongs to the RRM GAR family.</text>
</comment>
<gene>
    <name evidence="15" type="primary">NSR1</name>
    <name type="ordered locus">YGR159C</name>
    <name type="ORF">G7001</name>
</gene>
<reference key="1">
    <citation type="journal article" date="1991" name="J. Cell Biol.">
        <title>The NSR1 gene encodes a protein that specifically binds nuclear localization sequences and has two RNA recognition motifs.</title>
        <authorList>
            <person name="Lee W.-C."/>
            <person name="Xue Z."/>
            <person name="Melese T."/>
        </authorList>
    </citation>
    <scope>NUCLEOTIDE SEQUENCE [GENOMIC DNA]</scope>
    <scope>FUNCTION</scope>
    <scope>SUBCELLULAR LOCATION</scope>
    <source>
        <strain>ATCC 204508 / S288c</strain>
    </source>
</reference>
<reference key="2">
    <citation type="journal article" date="1992" name="J. Biol. Chem.">
        <title>Yeast NSR1 protein that has structural similarity to mammalian nucleolin is involved in pre-rRNA processing.</title>
        <authorList>
            <person name="Kondo K."/>
            <person name="Inouye M."/>
        </authorList>
    </citation>
    <scope>NUCLEOTIDE SEQUENCE [GENOMIC DNA]</scope>
    <scope>FUNCTION</scope>
    <source>
        <strain>ATCC 204508 / S288c</strain>
    </source>
</reference>
<reference key="3">
    <citation type="journal article" date="1995" name="Yeast">
        <title>The sequence of a 27 kb segment on the right arm of chromosome VII from Saccharomyces cerevisiae reveals MOL1, NAT2, RPL30B, RSR1, CYS4, PEM1/CHO2, NSR1 genes and ten new open reading frames.</title>
        <authorList>
            <person name="Skala J."/>
            <person name="Nawrocki A."/>
            <person name="Goffeau A."/>
        </authorList>
    </citation>
    <scope>NUCLEOTIDE SEQUENCE [GENOMIC DNA]</scope>
    <source>
        <strain>ATCC 204508 / S288c</strain>
    </source>
</reference>
<reference key="4">
    <citation type="journal article" date="1997" name="Nature">
        <title>The nucleotide sequence of Saccharomyces cerevisiae chromosome VII.</title>
        <authorList>
            <person name="Tettelin H."/>
            <person name="Agostoni-Carbone M.L."/>
            <person name="Albermann K."/>
            <person name="Albers M."/>
            <person name="Arroyo J."/>
            <person name="Backes U."/>
            <person name="Barreiros T."/>
            <person name="Bertani I."/>
            <person name="Bjourson A.J."/>
            <person name="Brueckner M."/>
            <person name="Bruschi C.V."/>
            <person name="Carignani G."/>
            <person name="Castagnoli L."/>
            <person name="Cerdan E."/>
            <person name="Clemente M.L."/>
            <person name="Coblenz A."/>
            <person name="Coglievina M."/>
            <person name="Coissac E."/>
            <person name="Defoor E."/>
            <person name="Del Bino S."/>
            <person name="Delius H."/>
            <person name="Delneri D."/>
            <person name="de Wergifosse P."/>
            <person name="Dujon B."/>
            <person name="Durand P."/>
            <person name="Entian K.-D."/>
            <person name="Eraso P."/>
            <person name="Escribano V."/>
            <person name="Fabiani L."/>
            <person name="Fartmann B."/>
            <person name="Feroli F."/>
            <person name="Feuermann M."/>
            <person name="Frontali L."/>
            <person name="Garcia-Gonzalez M."/>
            <person name="Garcia-Saez M.I."/>
            <person name="Goffeau A."/>
            <person name="Guerreiro P."/>
            <person name="Hani J."/>
            <person name="Hansen M."/>
            <person name="Hebling U."/>
            <person name="Hernandez K."/>
            <person name="Heumann K."/>
            <person name="Hilger F."/>
            <person name="Hofmann B."/>
            <person name="Indge K.J."/>
            <person name="James C.M."/>
            <person name="Klima R."/>
            <person name="Koetter P."/>
            <person name="Kramer B."/>
            <person name="Kramer W."/>
            <person name="Lauquin G."/>
            <person name="Leuther H."/>
            <person name="Louis E.J."/>
            <person name="Maillier E."/>
            <person name="Marconi A."/>
            <person name="Martegani E."/>
            <person name="Mazon M.J."/>
            <person name="Mazzoni C."/>
            <person name="McReynolds A.D.K."/>
            <person name="Melchioretto P."/>
            <person name="Mewes H.-W."/>
            <person name="Minenkova O."/>
            <person name="Mueller-Auer S."/>
            <person name="Nawrocki A."/>
            <person name="Netter P."/>
            <person name="Neu R."/>
            <person name="Nombela C."/>
            <person name="Oliver S.G."/>
            <person name="Panzeri L."/>
            <person name="Paoluzi S."/>
            <person name="Plevani P."/>
            <person name="Portetelle D."/>
            <person name="Portillo F."/>
            <person name="Potier S."/>
            <person name="Purnelle B."/>
            <person name="Rieger M."/>
            <person name="Riles L."/>
            <person name="Rinaldi T."/>
            <person name="Robben J."/>
            <person name="Rodrigues-Pousada C."/>
            <person name="Rodriguez-Belmonte E."/>
            <person name="Rodriguez-Torres A.M."/>
            <person name="Rose M."/>
            <person name="Ruzzi M."/>
            <person name="Saliola M."/>
            <person name="Sanchez-Perez M."/>
            <person name="Schaefer B."/>
            <person name="Schaefer M."/>
            <person name="Scharfe M."/>
            <person name="Schmidheini T."/>
            <person name="Schreer A."/>
            <person name="Skala J."/>
            <person name="Souciet J.-L."/>
            <person name="Steensma H.Y."/>
            <person name="Talla E."/>
            <person name="Thierry A."/>
            <person name="Vandenbol M."/>
            <person name="van der Aart Q.J.M."/>
            <person name="Van Dyck L."/>
            <person name="Vanoni M."/>
            <person name="Verhasselt P."/>
            <person name="Voet M."/>
            <person name="Volckaert G."/>
            <person name="Wambutt R."/>
            <person name="Watson M.D."/>
            <person name="Weber N."/>
            <person name="Wedler E."/>
            <person name="Wedler H."/>
            <person name="Wipfli P."/>
            <person name="Wolf K."/>
            <person name="Wright L.F."/>
            <person name="Zaccaria P."/>
            <person name="Zimmermann M."/>
            <person name="Zollner A."/>
            <person name="Kleine K."/>
        </authorList>
    </citation>
    <scope>NUCLEOTIDE SEQUENCE [LARGE SCALE GENOMIC DNA]</scope>
    <source>
        <strain>ATCC 204508 / S288c</strain>
    </source>
</reference>
<reference key="5">
    <citation type="journal article" date="2014" name="G3 (Bethesda)">
        <title>The reference genome sequence of Saccharomyces cerevisiae: Then and now.</title>
        <authorList>
            <person name="Engel S.R."/>
            <person name="Dietrich F.S."/>
            <person name="Fisk D.G."/>
            <person name="Binkley G."/>
            <person name="Balakrishnan R."/>
            <person name="Costanzo M.C."/>
            <person name="Dwight S.S."/>
            <person name="Hitz B.C."/>
            <person name="Karra K."/>
            <person name="Nash R.S."/>
            <person name="Weng S."/>
            <person name="Wong E.D."/>
            <person name="Lloyd P."/>
            <person name="Skrzypek M.S."/>
            <person name="Miyasato S.R."/>
            <person name="Simison M."/>
            <person name="Cherry J.M."/>
        </authorList>
    </citation>
    <scope>GENOME REANNOTATION</scope>
    <source>
        <strain>ATCC 204508 / S288c</strain>
    </source>
</reference>
<reference key="6">
    <citation type="journal article" date="1994" name="Nucleic Acids Res.">
        <title>Isolation and characterization of two Saccharomyces cerevisiae genes that encode proteins that bind to (TG1-3)n single strand telomeric DNA in vitro.</title>
        <authorList>
            <person name="Lin J.-J."/>
            <person name="Zakian V.A."/>
        </authorList>
    </citation>
    <scope>DNA-BINDING</scope>
</reference>
<reference key="7">
    <citation type="journal article" date="2003" name="Mol. Cell">
        <title>Assigning function to yeast proteins by integration of technologies.</title>
        <authorList>
            <person name="Hazbun T.R."/>
            <person name="Malmstroem L."/>
            <person name="Anderson S."/>
            <person name="Graczyk B.J."/>
            <person name="Fox B."/>
            <person name="Riffle M."/>
            <person name="Sundin B.A."/>
            <person name="Aranda J.D."/>
            <person name="McDonald W.H."/>
            <person name="Chiu C.-H."/>
            <person name="Snydsman B.E."/>
            <person name="Bradley P."/>
            <person name="Muller E.G.D."/>
            <person name="Fields S."/>
            <person name="Baker D."/>
            <person name="Yates J.R. III"/>
            <person name="Davis T.N."/>
        </authorList>
    </citation>
    <scope>IDENTIFICATION BY MASS SPECTROMETRY</scope>
</reference>
<reference key="8">
    <citation type="journal article" date="2003" name="Nature">
        <title>Global analysis of protein expression in yeast.</title>
        <authorList>
            <person name="Ghaemmaghami S."/>
            <person name="Huh W.-K."/>
            <person name="Bower K."/>
            <person name="Howson R.W."/>
            <person name="Belle A."/>
            <person name="Dephoure N."/>
            <person name="O'Shea E.K."/>
            <person name="Weissman J.S."/>
        </authorList>
    </citation>
    <scope>LEVEL OF PROTEIN EXPRESSION [LARGE SCALE ANALYSIS]</scope>
</reference>
<reference key="9">
    <citation type="journal article" date="2003" name="RNA">
        <title>In vivo analysis of nucleolar proteins modified by the yeast arginine methyltransferase Hmt1/Rmt1p.</title>
        <authorList>
            <person name="Xu C."/>
            <person name="Henry P.A."/>
            <person name="Setya A."/>
            <person name="Henry M.F."/>
        </authorList>
    </citation>
    <scope>SUBCELLULAR LOCATION</scope>
    <scope>METHYLATION BY HMT1</scope>
</reference>
<reference key="10">
    <citation type="journal article" date="2004" name="Science">
        <title>Phosphorylation of proteins by inositol pyrophosphates.</title>
        <authorList>
            <person name="Saiardi A."/>
            <person name="Bhandari R."/>
            <person name="Resnick A.C."/>
            <person name="Snowman A.M."/>
            <person name="Snyder S.H."/>
        </authorList>
    </citation>
    <scope>PYROPHOSPHORYLATION</scope>
</reference>
<reference key="11">
    <citation type="journal article" date="2007" name="Proc. Natl. Acad. Sci. U.S.A.">
        <title>Protein pyrophosphorylation by inositol pyrophosphates is a posttranslational event.</title>
        <authorList>
            <person name="Bhandari R."/>
            <person name="Saiardi A."/>
            <person name="Ahmadibeni Y."/>
            <person name="Snowman A.M."/>
            <person name="Resnick A.C."/>
            <person name="Kristiansen T.Z."/>
            <person name="Molina H."/>
            <person name="Pandey A."/>
            <person name="Werner J.K. Jr."/>
            <person name="Juluri K.R."/>
            <person name="Xu Y."/>
            <person name="Prestwich G.D."/>
            <person name="Parang K."/>
            <person name="Snyder S.H."/>
        </authorList>
    </citation>
    <scope>PYROPHOSPHORYLATION</scope>
</reference>
<reference key="12">
    <citation type="journal article" date="2013" name="Nat. Struct. Mol. Biol.">
        <title>Global analysis of yeast mRNPs.</title>
        <authorList>
            <person name="Mitchell S.F."/>
            <person name="Jain S."/>
            <person name="She M."/>
            <person name="Parker R."/>
        </authorList>
    </citation>
    <scope>SUBCELLULAR LOCATION</scope>
</reference>
<reference key="13">
    <citation type="journal article" date="2015" name="Proteomics">
        <title>Yeast proteins Gar1p, Nop1p, Npl3p, Nsr1p, and Rps2p are natively methylated and are substrates of the arginine methyltransferase Hmt1p.</title>
        <authorList>
            <person name="Yagoub D."/>
            <person name="Hart-Smith G."/>
            <person name="Moecking J."/>
            <person name="Erce M.A."/>
            <person name="Wilkins M.R."/>
        </authorList>
    </citation>
    <scope>METHYLATION AT ARG-353; ARG-357; ARG-375; ARG-379 AND ARG-382</scope>
</reference>
<reference key="14">
    <citation type="journal article" date="2015" name="Proteomics">
        <title>Expanding the yeast protein arginine methylome.</title>
        <authorList>
            <person name="Plank M."/>
            <person name="Fischer R."/>
            <person name="Geoghegan V."/>
            <person name="Charles P.D."/>
            <person name="Konietzny R."/>
            <person name="Acuto O."/>
            <person name="Pears C."/>
            <person name="Schofield C.J."/>
            <person name="Kessler B.M."/>
        </authorList>
    </citation>
    <scope>METHYLATION AT ARG-353; ARG-379; ARG-382 AND ARG-386</scope>
</reference>
<reference key="15">
    <citation type="journal article" date="2021" name="J. Proteome Res.">
        <title>Discovery of arginine methylation, phosphorylation, and their co-occurrence in condensate-associated proteins in Saccharomyces cerevisiae.</title>
        <authorList>
            <person name="Hamey J.J."/>
            <person name="Nguyen A."/>
            <person name="Wilkins M.R."/>
        </authorList>
    </citation>
    <scope>METHYLATION AT ARG-353; ARG-357; ARG-362; ARG-366; ARG-370; ARG-375; ARG-379 AND ARG-382</scope>
    <scope>PHOSPHORYLATION AT SER-93; SER-95; SER-96; SER-97; SER-116; SER-127; SER-129; SER-131 AND SER-143</scope>
</reference>
<feature type="chain" id="PRO_0000081690" description="Nuclear localization sequence-binding protein">
    <location>
        <begin position="1"/>
        <end position="414"/>
    </location>
</feature>
<feature type="domain" description="RRM 1" evidence="2">
    <location>
        <begin position="168"/>
        <end position="246"/>
    </location>
</feature>
<feature type="domain" description="RRM 2" evidence="2">
    <location>
        <begin position="267"/>
        <end position="345"/>
    </location>
</feature>
<feature type="region of interest" description="Disordered" evidence="3">
    <location>
        <begin position="1"/>
        <end position="172"/>
    </location>
</feature>
<feature type="region of interest" description="Disordered" evidence="3">
    <location>
        <begin position="244"/>
        <end position="264"/>
    </location>
</feature>
<feature type="region of interest" description="Disordered" evidence="3">
    <location>
        <begin position="336"/>
        <end position="414"/>
    </location>
</feature>
<feature type="region of interest" description="RGG-box">
    <location>
        <begin position="353"/>
        <end position="384"/>
    </location>
</feature>
<feature type="region of interest" description="RNA-binding RGG-box" evidence="1">
    <location>
        <begin position="366"/>
        <end position="384"/>
    </location>
</feature>
<feature type="compositionally biased region" description="Basic and acidic residues" evidence="3">
    <location>
        <begin position="10"/>
        <end position="26"/>
    </location>
</feature>
<feature type="compositionally biased region" description="Low complexity" evidence="3">
    <location>
        <begin position="27"/>
        <end position="44"/>
    </location>
</feature>
<feature type="compositionally biased region" description="Low complexity" evidence="3">
    <location>
        <begin position="54"/>
        <end position="73"/>
    </location>
</feature>
<feature type="compositionally biased region" description="Basic and acidic residues" evidence="3">
    <location>
        <begin position="78"/>
        <end position="87"/>
    </location>
</feature>
<feature type="compositionally biased region" description="Acidic residues" evidence="3">
    <location>
        <begin position="96"/>
        <end position="105"/>
    </location>
</feature>
<feature type="compositionally biased region" description="Basic and acidic residues" evidence="3">
    <location>
        <begin position="106"/>
        <end position="117"/>
    </location>
</feature>
<feature type="compositionally biased region" description="Low complexity" evidence="3">
    <location>
        <begin position="118"/>
        <end position="128"/>
    </location>
</feature>
<feature type="compositionally biased region" description="Basic and acidic residues" evidence="3">
    <location>
        <begin position="134"/>
        <end position="144"/>
    </location>
</feature>
<feature type="compositionally biased region" description="Gly residues" evidence="3">
    <location>
        <begin position="351"/>
        <end position="386"/>
    </location>
</feature>
<feature type="modified residue" description="Phosphoserine" evidence="13">
    <location>
        <position position="93"/>
    </location>
</feature>
<feature type="modified residue" description="Phosphoserine" evidence="13">
    <location>
        <position position="95"/>
    </location>
</feature>
<feature type="modified residue" description="Phosphoserine" evidence="13">
    <location>
        <position position="96"/>
    </location>
</feature>
<feature type="modified residue" description="Phosphoserine" evidence="13">
    <location>
        <position position="97"/>
    </location>
</feature>
<feature type="modified residue" description="Phosphoserine" evidence="13">
    <location>
        <position position="116"/>
    </location>
</feature>
<feature type="modified residue" description="Phosphoserine" evidence="13">
    <location>
        <position position="127"/>
    </location>
</feature>
<feature type="modified residue" description="Phosphoserine" evidence="13">
    <location>
        <position position="129"/>
    </location>
</feature>
<feature type="modified residue" description="Phosphoserine" evidence="13">
    <location>
        <position position="131"/>
    </location>
</feature>
<feature type="modified residue" description="Phosphoserine" evidence="13">
    <location>
        <position position="143"/>
    </location>
</feature>
<feature type="modified residue" description="Omega-N-methylarginine" evidence="11 12 13 17">
    <location>
        <position position="353"/>
    </location>
</feature>
<feature type="modified residue" description="Asymmetric dimethylarginine; by HMT1; alternate" evidence="13 17">
    <location>
        <position position="357"/>
    </location>
</feature>
<feature type="modified residue" description="Omega-N-methylarginine; by HMT1; alternate" evidence="12 13 17">
    <location>
        <position position="357"/>
    </location>
</feature>
<feature type="modified residue" description="Asymmetric dimethylarginine; by HMT1; alternate" evidence="13 17">
    <location>
        <position position="362"/>
    </location>
</feature>
<feature type="modified residue" description="Omega-N-methylarginine; by HMT1; alternate" evidence="13 17">
    <location>
        <position position="362"/>
    </location>
</feature>
<feature type="modified residue" description="Asymmetric dimethylarginine; by HMT1; alternate" evidence="13 17">
    <location>
        <position position="366"/>
    </location>
</feature>
<feature type="modified residue" description="Omega-N-methylarginine; by HMT1; alternate" evidence="13 17">
    <location>
        <position position="366"/>
    </location>
</feature>
<feature type="modified residue" description="Omega-N-methylarginine" evidence="13 17">
    <location>
        <position position="370"/>
    </location>
</feature>
<feature type="modified residue" description="Asymmetric dimethylarginine; by HMT1; alternate" evidence="12 13 17">
    <location>
        <position position="375"/>
    </location>
</feature>
<feature type="modified residue" description="Omega-N-methylarginine; by HMT1; alternate" evidence="12 13 17">
    <location>
        <position position="375"/>
    </location>
</feature>
<feature type="modified residue" description="Asymmetric dimethylarginine; by HMT1; alternate" evidence="12 13 17">
    <location>
        <position position="379"/>
    </location>
</feature>
<feature type="modified residue" description="Omega-N-methylarginine; by HMT1; alternate" evidence="11 13 17">
    <location>
        <position position="379"/>
    </location>
</feature>
<feature type="modified residue" description="Asymmetric dimethylarginine; by HMT1; alternate" evidence="13 17">
    <location>
        <position position="382"/>
    </location>
</feature>
<feature type="modified residue" description="Omega-N-methylarginine; by HMT1; alternate" evidence="11 12 13 17">
    <location>
        <position position="382"/>
    </location>
</feature>
<feature type="modified residue" description="Omega-N-methylarginine" evidence="11">
    <location>
        <position position="386"/>
    </location>
</feature>
<accession>P27476</accession>
<accession>D6VUT9</accession>
<keyword id="KW-0238">DNA-binding</keyword>
<keyword id="KW-0488">Methylation</keyword>
<keyword id="KW-0539">Nucleus</keyword>
<keyword id="KW-0597">Phosphoprotein</keyword>
<keyword id="KW-1185">Reference proteome</keyword>
<keyword id="KW-0677">Repeat</keyword>
<keyword id="KW-0694">RNA-binding</keyword>
<keyword id="KW-0698">rRNA processing</keyword>
<keyword id="KW-0346">Stress response</keyword>
<proteinExistence type="evidence at protein level"/>
<name>NSR1_YEAST</name>
<sequence length="414" mass="44535">MAKTTKVKGNKKEVKASKQAKEEKAKAVSSSSSESSSSSSSSSESESESESESESSSSSSSSDSESSSSSSSDSESEAETKKEESKDSSSSSSDSSSDEEEEEEKEETKKEESKESSSSDSSSSSSSDSESEKEESNDKKRKSEDAEEEEDEESSNKKQKNEETEEPATIFVGRLSWSIDDEWLKKEFEHIGGVIGARVIYERGTDRSRGYGYVDFENKSYAEKAIQEMQGKEIDGRPINCDMSTSKPAGNNDRAKKFGDTPSEPSDTLFLGNLSFNADRDAIFELFAKHGEVVSVRIPTHPETEQPKGFGYVQFSNMEDAKKALDALQGEYIDNRPVRLDFSSPRPNNDGGRGGSRGFGGRGGGRGGNRGFGGRGGARGGRGGFRPSGSGANTAPLGRSRNTASFAGSKKTFD</sequence>
<protein>
    <recommendedName>
        <fullName evidence="16">Nuclear localization sequence-binding protein</fullName>
    </recommendedName>
    <alternativeName>
        <fullName evidence="15">p67</fullName>
    </alternativeName>
</protein>
<evidence type="ECO:0000250" key="1"/>
<evidence type="ECO:0000255" key="2">
    <source>
        <dbReference type="PROSITE-ProRule" id="PRU00176"/>
    </source>
</evidence>
<evidence type="ECO:0000256" key="3">
    <source>
        <dbReference type="SAM" id="MobiDB-lite"/>
    </source>
</evidence>
<evidence type="ECO:0000269" key="4">
    <source>
    </source>
</evidence>
<evidence type="ECO:0000269" key="5">
    <source>
    </source>
</evidence>
<evidence type="ECO:0000269" key="6">
    <source>
    </source>
</evidence>
<evidence type="ECO:0000269" key="7">
    <source>
    </source>
</evidence>
<evidence type="ECO:0000269" key="8">
    <source>
    </source>
</evidence>
<evidence type="ECO:0000269" key="9">
    <source>
    </source>
</evidence>
<evidence type="ECO:0000269" key="10">
    <source>
    </source>
</evidence>
<evidence type="ECO:0000269" key="11">
    <source>
    </source>
</evidence>
<evidence type="ECO:0000269" key="12">
    <source>
    </source>
</evidence>
<evidence type="ECO:0000269" key="13">
    <source>
    </source>
</evidence>
<evidence type="ECO:0000269" key="14">
    <source>
    </source>
</evidence>
<evidence type="ECO:0000303" key="15">
    <source>
    </source>
</evidence>
<evidence type="ECO:0000305" key="16"/>
<evidence type="ECO:0000305" key="17">
    <source>
    </source>
</evidence>
<evidence type="ECO:0000305" key="18">
    <source>
    </source>
</evidence>
<organism>
    <name type="scientific">Saccharomyces cerevisiae (strain ATCC 204508 / S288c)</name>
    <name type="common">Baker's yeast</name>
    <dbReference type="NCBI Taxonomy" id="559292"/>
    <lineage>
        <taxon>Eukaryota</taxon>
        <taxon>Fungi</taxon>
        <taxon>Dikarya</taxon>
        <taxon>Ascomycota</taxon>
        <taxon>Saccharomycotina</taxon>
        <taxon>Saccharomycetes</taxon>
        <taxon>Saccharomycetales</taxon>
        <taxon>Saccharomycetaceae</taxon>
        <taxon>Saccharomyces</taxon>
    </lineage>
</organism>